<gene>
    <name evidence="1" type="primary">yciB</name>
    <name type="ordered locus">VSAL_I1147</name>
</gene>
<accession>B6EJA1</accession>
<sequence length="181" mass="20924">MKQILDFIPLIIFFALYKMYDIYTATGALIVATAVQLILTYVLYKKVEKMQLITFIMVTVFGGMTIFLHDDNFIKWKVTIVYAVFAAGLIIAQILGRPIIKGMLGKEVTLPDNKWNKINYAWILFFTACSIANLYVAFEMPLDVWVNFKVFGLLGLTFIYTLLTGMYVYKHMPKEKKEEQE</sequence>
<protein>
    <recommendedName>
        <fullName evidence="1">Inner membrane-spanning protein YciB</fullName>
    </recommendedName>
</protein>
<keyword id="KW-0997">Cell inner membrane</keyword>
<keyword id="KW-1003">Cell membrane</keyword>
<keyword id="KW-0472">Membrane</keyword>
<keyword id="KW-0812">Transmembrane</keyword>
<keyword id="KW-1133">Transmembrane helix</keyword>
<organism>
    <name type="scientific">Aliivibrio salmonicida (strain LFI1238)</name>
    <name type="common">Vibrio salmonicida (strain LFI1238)</name>
    <dbReference type="NCBI Taxonomy" id="316275"/>
    <lineage>
        <taxon>Bacteria</taxon>
        <taxon>Pseudomonadati</taxon>
        <taxon>Pseudomonadota</taxon>
        <taxon>Gammaproteobacteria</taxon>
        <taxon>Vibrionales</taxon>
        <taxon>Vibrionaceae</taxon>
        <taxon>Aliivibrio</taxon>
    </lineage>
</organism>
<feature type="chain" id="PRO_1000098869" description="Inner membrane-spanning protein YciB">
    <location>
        <begin position="1"/>
        <end position="181"/>
    </location>
</feature>
<feature type="transmembrane region" description="Helical" evidence="1">
    <location>
        <begin position="22"/>
        <end position="42"/>
    </location>
</feature>
<feature type="transmembrane region" description="Helical" evidence="1">
    <location>
        <begin position="50"/>
        <end position="70"/>
    </location>
</feature>
<feature type="transmembrane region" description="Helical" evidence="1">
    <location>
        <begin position="80"/>
        <end position="100"/>
    </location>
</feature>
<feature type="transmembrane region" description="Helical" evidence="1">
    <location>
        <begin position="118"/>
        <end position="138"/>
    </location>
</feature>
<feature type="transmembrane region" description="Helical" evidence="1">
    <location>
        <begin position="148"/>
        <end position="168"/>
    </location>
</feature>
<proteinExistence type="inferred from homology"/>
<reference key="1">
    <citation type="journal article" date="2008" name="BMC Genomics">
        <title>The genome sequence of the fish pathogen Aliivibrio salmonicida strain LFI1238 shows extensive evidence of gene decay.</title>
        <authorList>
            <person name="Hjerde E."/>
            <person name="Lorentzen M.S."/>
            <person name="Holden M.T."/>
            <person name="Seeger K."/>
            <person name="Paulsen S."/>
            <person name="Bason N."/>
            <person name="Churcher C."/>
            <person name="Harris D."/>
            <person name="Norbertczak H."/>
            <person name="Quail M.A."/>
            <person name="Sanders S."/>
            <person name="Thurston S."/>
            <person name="Parkhill J."/>
            <person name="Willassen N.P."/>
            <person name="Thomson N.R."/>
        </authorList>
    </citation>
    <scope>NUCLEOTIDE SEQUENCE [LARGE SCALE GENOMIC DNA]</scope>
    <source>
        <strain>LFI1238</strain>
    </source>
</reference>
<evidence type="ECO:0000255" key="1">
    <source>
        <dbReference type="HAMAP-Rule" id="MF_00189"/>
    </source>
</evidence>
<dbReference type="EMBL" id="FM178379">
    <property type="protein sequence ID" value="CAQ78832.1"/>
    <property type="molecule type" value="Genomic_DNA"/>
</dbReference>
<dbReference type="RefSeq" id="WP_012549892.1">
    <property type="nucleotide sequence ID" value="NC_011312.1"/>
</dbReference>
<dbReference type="KEGG" id="vsa:VSAL_I1147"/>
<dbReference type="eggNOG" id="COG2917">
    <property type="taxonomic scope" value="Bacteria"/>
</dbReference>
<dbReference type="HOGENOM" id="CLU_089554_2_0_6"/>
<dbReference type="Proteomes" id="UP000001730">
    <property type="component" value="Chromosome 1"/>
</dbReference>
<dbReference type="GO" id="GO:0005886">
    <property type="term" value="C:plasma membrane"/>
    <property type="evidence" value="ECO:0007669"/>
    <property type="project" value="UniProtKB-SubCell"/>
</dbReference>
<dbReference type="HAMAP" id="MF_00189">
    <property type="entry name" value="YciB"/>
    <property type="match status" value="1"/>
</dbReference>
<dbReference type="InterPro" id="IPR006008">
    <property type="entry name" value="YciB"/>
</dbReference>
<dbReference type="NCBIfam" id="TIGR00997">
    <property type="entry name" value="ispZ"/>
    <property type="match status" value="1"/>
</dbReference>
<dbReference type="NCBIfam" id="NF001324">
    <property type="entry name" value="PRK00259.1-2"/>
    <property type="match status" value="1"/>
</dbReference>
<dbReference type="NCBIfam" id="NF001325">
    <property type="entry name" value="PRK00259.1-3"/>
    <property type="match status" value="1"/>
</dbReference>
<dbReference type="PANTHER" id="PTHR36917:SF1">
    <property type="entry name" value="INNER MEMBRANE-SPANNING PROTEIN YCIB"/>
    <property type="match status" value="1"/>
</dbReference>
<dbReference type="PANTHER" id="PTHR36917">
    <property type="entry name" value="INTRACELLULAR SEPTATION PROTEIN A-RELATED"/>
    <property type="match status" value="1"/>
</dbReference>
<dbReference type="Pfam" id="PF04279">
    <property type="entry name" value="IspA"/>
    <property type="match status" value="1"/>
</dbReference>
<name>YCIB_ALISL</name>
<comment type="function">
    <text evidence="1">Plays a role in cell envelope biogenesis, maintenance of cell envelope integrity and membrane homeostasis.</text>
</comment>
<comment type="subcellular location">
    <subcellularLocation>
        <location evidence="1">Cell inner membrane</location>
        <topology evidence="1">Multi-pass membrane protein</topology>
    </subcellularLocation>
</comment>
<comment type="similarity">
    <text evidence="1">Belongs to the YciB family.</text>
</comment>